<dbReference type="EC" id="1.14.11.4" evidence="2"/>
<dbReference type="EMBL" id="AF054274">
    <property type="protein sequence ID" value="AAC25107.1"/>
    <property type="molecule type" value="mRNA"/>
</dbReference>
<dbReference type="EMBL" id="BT025353">
    <property type="protein sequence ID" value="ABF57309.1"/>
    <property type="molecule type" value="mRNA"/>
</dbReference>
<dbReference type="RefSeq" id="NP_776573.1">
    <property type="nucleotide sequence ID" value="NM_174148.1"/>
</dbReference>
<dbReference type="SMR" id="O77588"/>
<dbReference type="FunCoup" id="O77588">
    <property type="interactions" value="432"/>
</dbReference>
<dbReference type="IntAct" id="O77588">
    <property type="interactions" value="1"/>
</dbReference>
<dbReference type="STRING" id="9913.ENSBTAP00000002658"/>
<dbReference type="GlyCosmos" id="O77588">
    <property type="glycosylation" value="3 sites, No reported glycans"/>
</dbReference>
<dbReference type="GlyGen" id="O77588">
    <property type="glycosylation" value="3 sites"/>
</dbReference>
<dbReference type="SwissPalm" id="O77588"/>
<dbReference type="PaxDb" id="9913-ENSBTAP00000002658"/>
<dbReference type="PeptideAtlas" id="O77588"/>
<dbReference type="GeneID" id="281409"/>
<dbReference type="KEGG" id="bta:281409"/>
<dbReference type="CTD" id="5351"/>
<dbReference type="eggNOG" id="KOG1971">
    <property type="taxonomic scope" value="Eukaryota"/>
</dbReference>
<dbReference type="InParanoid" id="O77588"/>
<dbReference type="OrthoDB" id="69177at2759"/>
<dbReference type="Proteomes" id="UP000009136">
    <property type="component" value="Unplaced"/>
</dbReference>
<dbReference type="GO" id="GO:0062023">
    <property type="term" value="C:collagen-containing extracellular matrix"/>
    <property type="evidence" value="ECO:0000318"/>
    <property type="project" value="GO_Central"/>
</dbReference>
<dbReference type="GO" id="GO:0005783">
    <property type="term" value="C:endoplasmic reticulum"/>
    <property type="evidence" value="ECO:0000318"/>
    <property type="project" value="GO_Central"/>
</dbReference>
<dbReference type="GO" id="GO:0005615">
    <property type="term" value="C:extracellular space"/>
    <property type="evidence" value="ECO:0000318"/>
    <property type="project" value="GO_Central"/>
</dbReference>
<dbReference type="GO" id="GO:0005794">
    <property type="term" value="C:Golgi apparatus"/>
    <property type="evidence" value="ECO:0000318"/>
    <property type="project" value="GO_Central"/>
</dbReference>
<dbReference type="GO" id="GO:0030867">
    <property type="term" value="C:rough endoplasmic reticulum membrane"/>
    <property type="evidence" value="ECO:0007669"/>
    <property type="project" value="UniProtKB-SubCell"/>
</dbReference>
<dbReference type="GO" id="GO:0005506">
    <property type="term" value="F:iron ion binding"/>
    <property type="evidence" value="ECO:0007669"/>
    <property type="project" value="InterPro"/>
</dbReference>
<dbReference type="GO" id="GO:0031418">
    <property type="term" value="F:L-ascorbic acid binding"/>
    <property type="evidence" value="ECO:0007669"/>
    <property type="project" value="UniProtKB-KW"/>
</dbReference>
<dbReference type="GO" id="GO:0008475">
    <property type="term" value="F:procollagen-lysine 5-dioxygenase activity"/>
    <property type="evidence" value="ECO:0000250"/>
    <property type="project" value="UniProtKB"/>
</dbReference>
<dbReference type="GO" id="GO:0030199">
    <property type="term" value="P:collagen fibril organization"/>
    <property type="evidence" value="ECO:0000318"/>
    <property type="project" value="GO_Central"/>
</dbReference>
<dbReference type="GO" id="GO:0017185">
    <property type="term" value="P:peptidyl-lysine hydroxylation"/>
    <property type="evidence" value="ECO:0000250"/>
    <property type="project" value="UniProtKB"/>
</dbReference>
<dbReference type="CDD" id="cd23004">
    <property type="entry name" value="GT_LH1"/>
    <property type="match status" value="1"/>
</dbReference>
<dbReference type="FunFam" id="2.60.120.620:FF:000004">
    <property type="entry name" value="Procollagen-lysine,2-oxoglutarate 5-dioxygenase 2"/>
    <property type="match status" value="1"/>
</dbReference>
<dbReference type="Gene3D" id="2.60.120.620">
    <property type="entry name" value="q2cbj1_9rhob like domain"/>
    <property type="match status" value="1"/>
</dbReference>
<dbReference type="InterPro" id="IPR050757">
    <property type="entry name" value="Collagen_mod_GT25"/>
</dbReference>
<dbReference type="InterPro" id="IPR044861">
    <property type="entry name" value="IPNS-like_FE2OG_OXY"/>
</dbReference>
<dbReference type="InterPro" id="IPR029044">
    <property type="entry name" value="Nucleotide-diphossugar_trans"/>
</dbReference>
<dbReference type="InterPro" id="IPR005123">
    <property type="entry name" value="Oxoglu/Fe-dep_dioxygenase_dom"/>
</dbReference>
<dbReference type="InterPro" id="IPR006620">
    <property type="entry name" value="Pro_4_hyd_alph"/>
</dbReference>
<dbReference type="InterPro" id="IPR001006">
    <property type="entry name" value="Procol_lys_dOase"/>
</dbReference>
<dbReference type="PANTHER" id="PTHR10730:SF5">
    <property type="entry name" value="PROCOLLAGEN-LYSINE,2-OXOGLUTARATE 5-DIOXYGENASE 1"/>
    <property type="match status" value="1"/>
</dbReference>
<dbReference type="PANTHER" id="PTHR10730">
    <property type="entry name" value="PROCOLLAGEN-LYSINE,2-OXOGLUTARATE 5-DIOXYGENASE/GLYCOSYLTRANSFERASE 25 FAMILY MEMBER"/>
    <property type="match status" value="1"/>
</dbReference>
<dbReference type="Pfam" id="PF03171">
    <property type="entry name" value="2OG-FeII_Oxy"/>
    <property type="match status" value="1"/>
</dbReference>
<dbReference type="Pfam" id="PF25342">
    <property type="entry name" value="GT_PLOD"/>
    <property type="match status" value="1"/>
</dbReference>
<dbReference type="Pfam" id="PF25238">
    <property type="entry name" value="OGFOD2-like"/>
    <property type="match status" value="1"/>
</dbReference>
<dbReference type="SMART" id="SM00702">
    <property type="entry name" value="P4Hc"/>
    <property type="match status" value="1"/>
</dbReference>
<dbReference type="SUPFAM" id="SSF53448">
    <property type="entry name" value="Nucleotide-diphospho-sugar transferases"/>
    <property type="match status" value="1"/>
</dbReference>
<dbReference type="PROSITE" id="PS51471">
    <property type="entry name" value="FE2OG_OXY"/>
    <property type="match status" value="1"/>
</dbReference>
<dbReference type="PROSITE" id="PS01325">
    <property type="entry name" value="LYS_HYDROXYLASE"/>
    <property type="match status" value="1"/>
</dbReference>
<feature type="signal peptide" evidence="1">
    <location>
        <begin position="1"/>
        <end position="18"/>
    </location>
</feature>
<feature type="chain" id="PRO_0000024677" description="Procollagen-lysine,2-oxoglutarate 5-dioxygenase 1">
    <location>
        <begin position="19"/>
        <end position="726"/>
    </location>
</feature>
<feature type="domain" description="Fe2OG dioxygenase" evidence="5">
    <location>
        <begin position="635"/>
        <end position="726"/>
    </location>
</feature>
<feature type="active site" evidence="4">
    <location>
        <position position="717"/>
    </location>
</feature>
<feature type="binding site" evidence="5">
    <location>
        <position position="655"/>
    </location>
    <ligand>
        <name>Fe cation</name>
        <dbReference type="ChEBI" id="CHEBI:24875"/>
    </ligand>
</feature>
<feature type="binding site" evidence="5">
    <location>
        <position position="657"/>
    </location>
    <ligand>
        <name>Fe cation</name>
        <dbReference type="ChEBI" id="CHEBI:24875"/>
    </ligand>
</feature>
<feature type="binding site" evidence="5">
    <location>
        <position position="707"/>
    </location>
    <ligand>
        <name>Fe cation</name>
        <dbReference type="ChEBI" id="CHEBI:24875"/>
    </ligand>
</feature>
<feature type="glycosylation site" description="N-linked (GlcNAc...) asparagine" evidence="4">
    <location>
        <position position="196"/>
    </location>
</feature>
<feature type="glycosylation site" description="N-linked (GlcNAc...) asparagine" evidence="4">
    <location>
        <position position="537"/>
    </location>
</feature>
<feature type="glycosylation site" description="N-linked (GlcNAc...) asparagine" evidence="4">
    <location>
        <position position="685"/>
    </location>
</feature>
<feature type="sequence conflict" description="In Ref. 1; AAC25107." evidence="6" ref="1">
    <original>K</original>
    <variation>N</variation>
    <location>
        <position position="140"/>
    </location>
</feature>
<feature type="sequence conflict" description="In Ref. 1; AAC25107." evidence="6" ref="1">
    <original>S</original>
    <variation>I</variation>
    <location>
        <position position="164"/>
    </location>
</feature>
<feature type="sequence conflict" description="In Ref. 1; AAC25107." evidence="6" ref="1">
    <original>LD</original>
    <variation>FH</variation>
    <location>
        <begin position="209"/>
        <end position="210"/>
    </location>
</feature>
<feature type="sequence conflict" description="In Ref. 1; AAC25107." evidence="6" ref="1">
    <original>R</original>
    <variation>L</variation>
    <location>
        <position position="309"/>
    </location>
</feature>
<feature type="sequence conflict" description="In Ref. 1; AAC25107." evidence="6" ref="1">
    <original>L</original>
    <variation>F</variation>
    <location>
        <position position="317"/>
    </location>
</feature>
<feature type="sequence conflict" description="In Ref. 1; AAC25107." evidence="6" ref="1">
    <original>A</original>
    <variation>T</variation>
    <location>
        <position position="404"/>
    </location>
</feature>
<feature type="sequence conflict" description="In Ref. 1; AAC25107." evidence="6" ref="1">
    <original>F</original>
    <variation>Y</variation>
    <location>
        <position position="607"/>
    </location>
</feature>
<feature type="sequence conflict" description="In Ref. 1; AAC25107." evidence="6" ref="1">
    <original>A</original>
    <variation>G</variation>
    <location>
        <position position="666"/>
    </location>
</feature>
<feature type="sequence conflict" description="In Ref. 1; AAC25107." evidence="6" ref="1">
    <original>L</original>
    <variation>V</variation>
    <location>
        <position position="710"/>
    </location>
</feature>
<name>PLOD1_BOVIN</name>
<accession>O77588</accession>
<accession>Q1JPK0</accession>
<reference key="1">
    <citation type="submission" date="1998-03" db="EMBL/GenBank/DDBJ databases">
        <authorList>
            <person name="Knight M.A."/>
            <person name="Drinkwater R.D."/>
        </authorList>
    </citation>
    <scope>NUCLEOTIDE SEQUENCE [MRNA]</scope>
</reference>
<reference key="2">
    <citation type="journal article" date="2005" name="BMC Genomics">
        <title>Characterization of 954 bovine full-CDS cDNA sequences.</title>
        <authorList>
            <person name="Harhay G.P."/>
            <person name="Sonstegard T.S."/>
            <person name="Keele J.W."/>
            <person name="Heaton M.P."/>
            <person name="Clawson M.L."/>
            <person name="Snelling W.M."/>
            <person name="Wiedmann R.T."/>
            <person name="Van Tassell C.P."/>
            <person name="Smith T.P.L."/>
        </authorList>
    </citation>
    <scope>NUCLEOTIDE SEQUENCE [LARGE SCALE MRNA]</scope>
</reference>
<gene>
    <name type="primary">PLOD1</name>
    <name type="synonym">PLOD</name>
</gene>
<protein>
    <recommendedName>
        <fullName>Procollagen-lysine,2-oxoglutarate 5-dioxygenase 1</fullName>
        <ecNumber evidence="2">1.14.11.4</ecNumber>
    </recommendedName>
    <alternativeName>
        <fullName>Lysyl hydroxylase 1</fullName>
        <shortName>LH1</shortName>
    </alternativeName>
</protein>
<keyword id="KW-0223">Dioxygenase</keyword>
<keyword id="KW-0256">Endoplasmic reticulum</keyword>
<keyword id="KW-0325">Glycoprotein</keyword>
<keyword id="KW-0408">Iron</keyword>
<keyword id="KW-0472">Membrane</keyword>
<keyword id="KW-0479">Metal-binding</keyword>
<keyword id="KW-0560">Oxidoreductase</keyword>
<keyword id="KW-1185">Reference proteome</keyword>
<keyword id="KW-0732">Signal</keyword>
<keyword id="KW-0847">Vitamin C</keyword>
<sequence>MRLLLLLAPLGWLLLAETKGDAKPEDNLLVLTVATKETEGFRRFKRSAQFFNYKIQALGLGEDWPGEAMLAGGGLKVRLLKKALEKHADKENLVILFTDSYDVVFASGPRELLKKFRQARSQVVFSAEELIYPDRRLEAKYPVVSDGKRFLGSGGFIGYAPNLSKLVAEWEGQDSDSDQLFYTKIFLDPEKREQINITLDHRCRIFQNLDGALDEVVLKFEMGQVRARNLAYDTLPVLIHGNGPTKLQLNYLGNYIPRFWTFETGCAVCDEGLRSLKGIGDEALPAVLVGVFIEQPTPFLSLFFQRLLRLHYPQKRLRLFIHNHEQHHKAQVEQFLAEHGDEYQSVKLVGPEVRVANADARNMGADLCRQDRGCTYYFSVDADVALTEPKTLRLLIEQNKNVIAPLMTRHGRLWSNFWGALSADGYYARSEDYVDIVQGRRVGVWNVPYISNIYLIKGSALRAELQETDLFHHSKLDPDMAFCANIRQQDVFMFLTNRHSFGHLLSLDSYQTTHLHNDLWEVFSNPEDWKEKYIHENYTKALAGKMVEMPCPDVYWFPIFTETACDELVEEMEHYGQWSLGDNKDNRIQGGYENVPTIDIHMNQINFEREWHKFLVEYIAPMTEKLYPGYYTRAQFDLAFVVRYKPDEQPSLVPHHDASTFTINIALNRVGVDYEGGGCRFLRYNCSIRAPRKGWTLMHPGRLTHYHEGLPTTKGTRYIAVSFVDP</sequence>
<proteinExistence type="evidence at transcript level"/>
<evidence type="ECO:0000250" key="1"/>
<evidence type="ECO:0000250" key="2">
    <source>
        <dbReference type="UniProtKB" id="P24802"/>
    </source>
</evidence>
<evidence type="ECO:0000250" key="3">
    <source>
        <dbReference type="UniProtKB" id="Q9R0E2"/>
    </source>
</evidence>
<evidence type="ECO:0000255" key="4"/>
<evidence type="ECO:0000255" key="5">
    <source>
        <dbReference type="PROSITE-ProRule" id="PRU00805"/>
    </source>
</evidence>
<evidence type="ECO:0000305" key="6"/>
<comment type="function">
    <text evidence="2 3">Part of a complex composed of PLOD1, P3H3 and P3H4 that catalyzes hydroxylation of lysine residues in collagen alpha chains and is required for normal assembly and cross-linkling of collagen fibrils (By similarity). Forms hydroxylysine residues in -Xaa-Lys-Gly- sequences in collagens (By similarity). These hydroxylysines serve as sites of attachment for carbohydrate units and are essential for the stability of the intermolecular collagen cross-links (By similarity).</text>
</comment>
<comment type="catalytic activity">
    <reaction evidence="2">
        <text>L-lysyl-[collagen] + 2-oxoglutarate + O2 = (5R)-5-hydroxy-L-lysyl-[collagen] + succinate + CO2</text>
        <dbReference type="Rhea" id="RHEA:16569"/>
        <dbReference type="Rhea" id="RHEA-COMP:12751"/>
        <dbReference type="Rhea" id="RHEA-COMP:12752"/>
        <dbReference type="ChEBI" id="CHEBI:15379"/>
        <dbReference type="ChEBI" id="CHEBI:16526"/>
        <dbReference type="ChEBI" id="CHEBI:16810"/>
        <dbReference type="ChEBI" id="CHEBI:29969"/>
        <dbReference type="ChEBI" id="CHEBI:30031"/>
        <dbReference type="ChEBI" id="CHEBI:133442"/>
        <dbReference type="EC" id="1.14.11.4"/>
    </reaction>
</comment>
<comment type="cofactor">
    <cofactor evidence="2">
        <name>Fe(2+)</name>
        <dbReference type="ChEBI" id="CHEBI:29033"/>
    </cofactor>
</comment>
<comment type="cofactor">
    <cofactor evidence="2">
        <name>L-ascorbate</name>
        <dbReference type="ChEBI" id="CHEBI:38290"/>
    </cofactor>
</comment>
<comment type="subunit">
    <text evidence="2 3">Homodimer (By similarity). Identified in a complex with P3H3 and P3H4 (By similarity).</text>
</comment>
<comment type="subcellular location">
    <subcellularLocation>
        <location>Rough endoplasmic reticulum membrane</location>
        <topology>Peripheral membrane protein</topology>
        <orientation>Lumenal side</orientation>
    </subcellularLocation>
</comment>
<organism>
    <name type="scientific">Bos taurus</name>
    <name type="common">Bovine</name>
    <dbReference type="NCBI Taxonomy" id="9913"/>
    <lineage>
        <taxon>Eukaryota</taxon>
        <taxon>Metazoa</taxon>
        <taxon>Chordata</taxon>
        <taxon>Craniata</taxon>
        <taxon>Vertebrata</taxon>
        <taxon>Euteleostomi</taxon>
        <taxon>Mammalia</taxon>
        <taxon>Eutheria</taxon>
        <taxon>Laurasiatheria</taxon>
        <taxon>Artiodactyla</taxon>
        <taxon>Ruminantia</taxon>
        <taxon>Pecora</taxon>
        <taxon>Bovidae</taxon>
        <taxon>Bovinae</taxon>
        <taxon>Bos</taxon>
    </lineage>
</organism>